<evidence type="ECO:0000255" key="1">
    <source>
        <dbReference type="HAMAP-Rule" id="MF_01249"/>
    </source>
</evidence>
<sequence>MSVLVKEVIEKLRLDIVYGEPELLEKEINTADITRPGLEMTGYFDYYTPERIQLLGMKEWSYLISMPSNSRYEVLKKMFLPETPAVIVARGLVVPEEMLKAARECKIAILTSRAATSRLSGELSSYLDSRLAERTSVHGVLMDIYGMGVLIQGDSGIGKSETGLELVKRGHRLVADDRVDIFAKDEITLWGEPAEILKHLIEIRGVGIIDVMSLYGASAVKDSSQVQLAVYLENYDTHKTFDRLGNNAEELEVSGVAIPRIRIPVKTGRNISVVIEAAAMNYRAKEMGFDATRLFDERLTSLIARNEVQNA</sequence>
<keyword id="KW-0067">ATP-binding</keyword>
<keyword id="KW-0119">Carbohydrate metabolism</keyword>
<keyword id="KW-0418">Kinase</keyword>
<keyword id="KW-0460">Magnesium</keyword>
<keyword id="KW-0479">Metal-binding</keyword>
<keyword id="KW-0511">Multifunctional enzyme</keyword>
<keyword id="KW-0547">Nucleotide-binding</keyword>
<keyword id="KW-0723">Serine/threonine-protein kinase</keyword>
<keyword id="KW-0808">Transferase</keyword>
<feature type="chain" id="PRO_1000165077" description="HPr kinase/phosphorylase">
    <location>
        <begin position="1"/>
        <end position="311"/>
    </location>
</feature>
<feature type="region of interest" description="Important for the catalytic mechanism of both phosphorylation and dephosphorylation" evidence="1">
    <location>
        <begin position="201"/>
        <end position="210"/>
    </location>
</feature>
<feature type="region of interest" description="Important for the catalytic mechanism of dephosphorylation" evidence="1">
    <location>
        <begin position="264"/>
        <end position="269"/>
    </location>
</feature>
<feature type="active site" evidence="1">
    <location>
        <position position="138"/>
    </location>
</feature>
<feature type="active site" evidence="1">
    <location>
        <position position="159"/>
    </location>
</feature>
<feature type="active site" description="Proton acceptor; for phosphorylation activity. Proton donor; for dephosphorylation activity" evidence="1">
    <location>
        <position position="177"/>
    </location>
</feature>
<feature type="active site" evidence="1">
    <location>
        <position position="243"/>
    </location>
</feature>
<feature type="binding site" evidence="1">
    <location>
        <begin position="153"/>
        <end position="160"/>
    </location>
    <ligand>
        <name>ATP</name>
        <dbReference type="ChEBI" id="CHEBI:30616"/>
    </ligand>
</feature>
<feature type="binding site" evidence="1">
    <location>
        <position position="160"/>
    </location>
    <ligand>
        <name>Mg(2+)</name>
        <dbReference type="ChEBI" id="CHEBI:18420"/>
    </ligand>
</feature>
<feature type="binding site" evidence="1">
    <location>
        <position position="202"/>
    </location>
    <ligand>
        <name>Mg(2+)</name>
        <dbReference type="ChEBI" id="CHEBI:18420"/>
    </ligand>
</feature>
<reference key="1">
    <citation type="journal article" date="2009" name="J. Bacteriol.">
        <title>Role of conjugative elements in the evolution of the multidrug-resistant pandemic clone Streptococcus pneumoniae Spain23F ST81.</title>
        <authorList>
            <person name="Croucher N.J."/>
            <person name="Walker D."/>
            <person name="Romero P."/>
            <person name="Lennard N."/>
            <person name="Paterson G.K."/>
            <person name="Bason N.C."/>
            <person name="Mitchell A.M."/>
            <person name="Quail M.A."/>
            <person name="Andrew P.W."/>
            <person name="Parkhill J."/>
            <person name="Bentley S.D."/>
            <person name="Mitchell T.J."/>
        </authorList>
    </citation>
    <scope>NUCLEOTIDE SEQUENCE [LARGE SCALE GENOMIC DNA]</scope>
    <source>
        <strain>ATCC 700669 / Spain 23F-1</strain>
    </source>
</reference>
<organism>
    <name type="scientific">Streptococcus pneumoniae (strain ATCC 700669 / Spain 23F-1)</name>
    <dbReference type="NCBI Taxonomy" id="561276"/>
    <lineage>
        <taxon>Bacteria</taxon>
        <taxon>Bacillati</taxon>
        <taxon>Bacillota</taxon>
        <taxon>Bacilli</taxon>
        <taxon>Lactobacillales</taxon>
        <taxon>Streptococcaceae</taxon>
        <taxon>Streptococcus</taxon>
    </lineage>
</organism>
<gene>
    <name evidence="1" type="primary">hprK</name>
    <name type="ordered locus">SPN23F13780</name>
</gene>
<accession>B8ZKX2</accession>
<protein>
    <recommendedName>
        <fullName evidence="1">HPr kinase/phosphorylase</fullName>
        <shortName evidence="1">HPrK/P</shortName>
        <ecNumber evidence="1">2.7.11.-</ecNumber>
        <ecNumber evidence="1">2.7.4.-</ecNumber>
    </recommendedName>
    <alternativeName>
        <fullName evidence="1">HPr(Ser) kinase/phosphorylase</fullName>
    </alternativeName>
</protein>
<comment type="function">
    <text evidence="1">Catalyzes the ATP- as well as the pyrophosphate-dependent phosphorylation of a specific serine residue in HPr, a phosphocarrier protein of the phosphoenolpyruvate-dependent sugar phosphotransferase system (PTS). HprK/P also catalyzes the pyrophosphate-producing, inorganic phosphate-dependent dephosphorylation (phosphorolysis) of seryl-phosphorylated HPr (P-Ser-HPr). The two antagonistic activities of HprK/P are regulated by several intracellular metabolites, which change their concentration in response to the absence or presence of rapidly metabolisable carbon sources (glucose, fructose, etc.) in the growth medium. Therefore, by controlling the phosphorylation state of HPr, HPrK/P is a sensor enzyme that plays a major role in the regulation of carbon metabolism and sugar transport: it mediates carbon catabolite repression (CCR), and regulates PTS-catalyzed carbohydrate uptake and inducer exclusion.</text>
</comment>
<comment type="catalytic activity">
    <reaction evidence="1">
        <text>[HPr protein]-L-serine + ATP = [HPr protein]-O-phospho-L-serine + ADP + H(+)</text>
        <dbReference type="Rhea" id="RHEA:46600"/>
        <dbReference type="Rhea" id="RHEA-COMP:11602"/>
        <dbReference type="Rhea" id="RHEA-COMP:11603"/>
        <dbReference type="ChEBI" id="CHEBI:15378"/>
        <dbReference type="ChEBI" id="CHEBI:29999"/>
        <dbReference type="ChEBI" id="CHEBI:30616"/>
        <dbReference type="ChEBI" id="CHEBI:83421"/>
        <dbReference type="ChEBI" id="CHEBI:456216"/>
    </reaction>
</comment>
<comment type="catalytic activity">
    <reaction evidence="1">
        <text>[HPr protein]-O-phospho-L-serine + phosphate + H(+) = [HPr protein]-L-serine + diphosphate</text>
        <dbReference type="Rhea" id="RHEA:46604"/>
        <dbReference type="Rhea" id="RHEA-COMP:11602"/>
        <dbReference type="Rhea" id="RHEA-COMP:11603"/>
        <dbReference type="ChEBI" id="CHEBI:15378"/>
        <dbReference type="ChEBI" id="CHEBI:29999"/>
        <dbReference type="ChEBI" id="CHEBI:33019"/>
        <dbReference type="ChEBI" id="CHEBI:43474"/>
        <dbReference type="ChEBI" id="CHEBI:83421"/>
    </reaction>
</comment>
<comment type="cofactor">
    <cofactor evidence="1">
        <name>Mg(2+)</name>
        <dbReference type="ChEBI" id="CHEBI:18420"/>
    </cofactor>
</comment>
<comment type="subunit">
    <text evidence="1">Homohexamer.</text>
</comment>
<comment type="domain">
    <text evidence="1">The Walker A ATP-binding motif also binds Pi and PPi.</text>
</comment>
<comment type="miscellaneous">
    <text evidence="1">Both phosphorylation and phosphorolysis are carried out by the same active site and suggest a common mechanism for both reactions.</text>
</comment>
<comment type="similarity">
    <text evidence="1">Belongs to the HPrK/P family.</text>
</comment>
<proteinExistence type="inferred from homology"/>
<dbReference type="EC" id="2.7.11.-" evidence="1"/>
<dbReference type="EC" id="2.7.4.-" evidence="1"/>
<dbReference type="EMBL" id="FM211187">
    <property type="protein sequence ID" value="CAR69177.1"/>
    <property type="molecule type" value="Genomic_DNA"/>
</dbReference>
<dbReference type="RefSeq" id="WP_000115143.1">
    <property type="nucleotide sequence ID" value="NC_011900.1"/>
</dbReference>
<dbReference type="SMR" id="B8ZKX2"/>
<dbReference type="KEGG" id="sne:SPN23F13780"/>
<dbReference type="HOGENOM" id="CLU_052030_0_1_9"/>
<dbReference type="GO" id="GO:0005524">
    <property type="term" value="F:ATP binding"/>
    <property type="evidence" value="ECO:0007669"/>
    <property type="project" value="UniProtKB-UniRule"/>
</dbReference>
<dbReference type="GO" id="GO:0000287">
    <property type="term" value="F:magnesium ion binding"/>
    <property type="evidence" value="ECO:0007669"/>
    <property type="project" value="UniProtKB-UniRule"/>
</dbReference>
<dbReference type="GO" id="GO:0000155">
    <property type="term" value="F:phosphorelay sensor kinase activity"/>
    <property type="evidence" value="ECO:0007669"/>
    <property type="project" value="InterPro"/>
</dbReference>
<dbReference type="GO" id="GO:0004674">
    <property type="term" value="F:protein serine/threonine kinase activity"/>
    <property type="evidence" value="ECO:0007669"/>
    <property type="project" value="UniProtKB-KW"/>
</dbReference>
<dbReference type="GO" id="GO:0004712">
    <property type="term" value="F:protein serine/threonine/tyrosine kinase activity"/>
    <property type="evidence" value="ECO:0007669"/>
    <property type="project" value="UniProtKB-UniRule"/>
</dbReference>
<dbReference type="GO" id="GO:0006109">
    <property type="term" value="P:regulation of carbohydrate metabolic process"/>
    <property type="evidence" value="ECO:0007669"/>
    <property type="project" value="UniProtKB-UniRule"/>
</dbReference>
<dbReference type="CDD" id="cd01918">
    <property type="entry name" value="HprK_C"/>
    <property type="match status" value="1"/>
</dbReference>
<dbReference type="FunFam" id="3.40.1390.20:FF:000005">
    <property type="entry name" value="HPr kinase/phosphorylase"/>
    <property type="match status" value="1"/>
</dbReference>
<dbReference type="FunFam" id="3.40.50.300:FF:000174">
    <property type="entry name" value="HPr kinase/phosphorylase"/>
    <property type="match status" value="1"/>
</dbReference>
<dbReference type="Gene3D" id="3.40.1390.20">
    <property type="entry name" value="HprK N-terminal domain-like"/>
    <property type="match status" value="1"/>
</dbReference>
<dbReference type="Gene3D" id="3.40.50.300">
    <property type="entry name" value="P-loop containing nucleotide triphosphate hydrolases"/>
    <property type="match status" value="1"/>
</dbReference>
<dbReference type="HAMAP" id="MF_01249">
    <property type="entry name" value="HPr_kinase"/>
    <property type="match status" value="1"/>
</dbReference>
<dbReference type="InterPro" id="IPR003755">
    <property type="entry name" value="HPr(Ser)_kin/Pase"/>
</dbReference>
<dbReference type="InterPro" id="IPR011104">
    <property type="entry name" value="Hpr_kin/Pase_C"/>
</dbReference>
<dbReference type="InterPro" id="IPR011126">
    <property type="entry name" value="Hpr_kin/Pase_Hpr_N"/>
</dbReference>
<dbReference type="InterPro" id="IPR027417">
    <property type="entry name" value="P-loop_NTPase"/>
</dbReference>
<dbReference type="InterPro" id="IPR028979">
    <property type="entry name" value="Ser_kin/Pase_Hpr-like_N_sf"/>
</dbReference>
<dbReference type="NCBIfam" id="TIGR00679">
    <property type="entry name" value="hpr-ser"/>
    <property type="match status" value="1"/>
</dbReference>
<dbReference type="PANTHER" id="PTHR30305:SF1">
    <property type="entry name" value="HPR KINASE_PHOSPHORYLASE"/>
    <property type="match status" value="1"/>
</dbReference>
<dbReference type="PANTHER" id="PTHR30305">
    <property type="entry name" value="PROTEIN YJDM-RELATED"/>
    <property type="match status" value="1"/>
</dbReference>
<dbReference type="Pfam" id="PF07475">
    <property type="entry name" value="Hpr_kinase_C"/>
    <property type="match status" value="1"/>
</dbReference>
<dbReference type="Pfam" id="PF02603">
    <property type="entry name" value="Hpr_kinase_N"/>
    <property type="match status" value="1"/>
</dbReference>
<dbReference type="SUPFAM" id="SSF75138">
    <property type="entry name" value="HprK N-terminal domain-like"/>
    <property type="match status" value="1"/>
</dbReference>
<dbReference type="SUPFAM" id="SSF53795">
    <property type="entry name" value="PEP carboxykinase-like"/>
    <property type="match status" value="1"/>
</dbReference>
<name>HPRK_STRPJ</name>